<gene>
    <name type="primary">MET</name>
</gene>
<evidence type="ECO:0000250" key="1"/>
<evidence type="ECO:0000250" key="2">
    <source>
        <dbReference type="UniProtKB" id="P08581"/>
    </source>
</evidence>
<evidence type="ECO:0000250" key="3">
    <source>
        <dbReference type="UniProtKB" id="P16056"/>
    </source>
</evidence>
<evidence type="ECO:0000255" key="4"/>
<evidence type="ECO:0000255" key="5">
    <source>
        <dbReference type="PROSITE-ProRule" id="PRU00159"/>
    </source>
</evidence>
<evidence type="ECO:0000255" key="6">
    <source>
        <dbReference type="PROSITE-ProRule" id="PRU00352"/>
    </source>
</evidence>
<evidence type="ECO:0000255" key="7">
    <source>
        <dbReference type="PROSITE-ProRule" id="PRU10028"/>
    </source>
</evidence>
<dbReference type="EC" id="2.7.10.1"/>
<dbReference type="EMBL" id="DP000006">
    <property type="protein sequence ID" value="AAY89012.1"/>
    <property type="molecule type" value="Genomic_DNA"/>
</dbReference>
<dbReference type="RefSeq" id="NP_001164511.1">
    <property type="nucleotide sequence ID" value="NM_001171040.1"/>
</dbReference>
<dbReference type="SMR" id="Q09YN5"/>
<dbReference type="FunCoup" id="Q09YN5">
    <property type="interactions" value="19"/>
</dbReference>
<dbReference type="STRING" id="9986.ENSOCUP00000003111"/>
<dbReference type="GlyCosmos" id="Q09YN5">
    <property type="glycosylation" value="11 sites, No reported glycans"/>
</dbReference>
<dbReference type="PaxDb" id="9986-ENSOCUP00000011247"/>
<dbReference type="Ensembl" id="ENSOCUT00000013064.4">
    <property type="protein sequence ID" value="ENSOCUP00000011247.2"/>
    <property type="gene ID" value="ENSOCUG00000013060.4"/>
</dbReference>
<dbReference type="GeneID" id="100126565"/>
<dbReference type="KEGG" id="ocu:100126565"/>
<dbReference type="CTD" id="4233"/>
<dbReference type="eggNOG" id="KOG1095">
    <property type="taxonomic scope" value="Eukaryota"/>
</dbReference>
<dbReference type="eggNOG" id="KOG3610">
    <property type="taxonomic scope" value="Eukaryota"/>
</dbReference>
<dbReference type="GeneTree" id="ENSGT00940000158022"/>
<dbReference type="HOGENOM" id="CLU_005158_0_0_1"/>
<dbReference type="InParanoid" id="Q09YN5"/>
<dbReference type="OMA" id="DEEPGQC"/>
<dbReference type="OrthoDB" id="9985181at2759"/>
<dbReference type="TreeFam" id="TF317402"/>
<dbReference type="Proteomes" id="UP000001811">
    <property type="component" value="Chromosome 7"/>
</dbReference>
<dbReference type="Bgee" id="ENSOCUG00000013060">
    <property type="expression patterns" value="Expressed in skeletal muscle tissue and 15 other cell types or tissues"/>
</dbReference>
<dbReference type="ExpressionAtlas" id="Q09YN5">
    <property type="expression patterns" value="baseline"/>
</dbReference>
<dbReference type="GO" id="GO:0005886">
    <property type="term" value="C:plasma membrane"/>
    <property type="evidence" value="ECO:0007669"/>
    <property type="project" value="TreeGrafter"/>
</dbReference>
<dbReference type="GO" id="GO:0002116">
    <property type="term" value="C:semaphorin receptor complex"/>
    <property type="evidence" value="ECO:0007669"/>
    <property type="project" value="TreeGrafter"/>
</dbReference>
<dbReference type="GO" id="GO:0005524">
    <property type="term" value="F:ATP binding"/>
    <property type="evidence" value="ECO:0007669"/>
    <property type="project" value="UniProtKB-KW"/>
</dbReference>
<dbReference type="GO" id="GO:0017154">
    <property type="term" value="F:semaphorin receptor activity"/>
    <property type="evidence" value="ECO:0007669"/>
    <property type="project" value="InterPro"/>
</dbReference>
<dbReference type="GO" id="GO:0004714">
    <property type="term" value="F:transmembrane receptor protein tyrosine kinase activity"/>
    <property type="evidence" value="ECO:0007669"/>
    <property type="project" value="UniProtKB-EC"/>
</dbReference>
<dbReference type="GO" id="GO:0007169">
    <property type="term" value="P:cell surface receptor protein tyrosine kinase signaling pathway"/>
    <property type="evidence" value="ECO:0007669"/>
    <property type="project" value="InterPro"/>
</dbReference>
<dbReference type="GO" id="GO:0050918">
    <property type="term" value="P:positive chemotaxis"/>
    <property type="evidence" value="ECO:0000250"/>
    <property type="project" value="UniProtKB"/>
</dbReference>
<dbReference type="GO" id="GO:2001028">
    <property type="term" value="P:positive regulation of endothelial cell chemotaxis"/>
    <property type="evidence" value="ECO:0000250"/>
    <property type="project" value="UniProtKB"/>
</dbReference>
<dbReference type="GO" id="GO:0071526">
    <property type="term" value="P:semaphorin-plexin signaling pathway"/>
    <property type="evidence" value="ECO:0000250"/>
    <property type="project" value="UniProtKB"/>
</dbReference>
<dbReference type="CDD" id="cd00603">
    <property type="entry name" value="IPT_PCSR"/>
    <property type="match status" value="1"/>
</dbReference>
<dbReference type="CDD" id="cd01180">
    <property type="entry name" value="IPT_plexin_repeat1"/>
    <property type="match status" value="1"/>
</dbReference>
<dbReference type="CDD" id="cd01179">
    <property type="entry name" value="IPT_plexin_repeat2"/>
    <property type="match status" value="1"/>
</dbReference>
<dbReference type="CDD" id="cd01181">
    <property type="entry name" value="IPT_plexin_repeat3"/>
    <property type="match status" value="1"/>
</dbReference>
<dbReference type="CDD" id="cd05058">
    <property type="entry name" value="PTKc_Met_Ron"/>
    <property type="match status" value="1"/>
</dbReference>
<dbReference type="FunFam" id="1.10.510.10:FF:000093">
    <property type="entry name" value="Hepatocyte growth factor receptor"/>
    <property type="match status" value="1"/>
</dbReference>
<dbReference type="FunFam" id="2.130.10.10:FF:000088">
    <property type="entry name" value="Hepatocyte growth factor receptor"/>
    <property type="match status" value="1"/>
</dbReference>
<dbReference type="FunFam" id="2.60.40.10:FF:000213">
    <property type="entry name" value="Hepatocyte growth factor receptor"/>
    <property type="match status" value="1"/>
</dbReference>
<dbReference type="FunFam" id="2.60.40.10:FF:000400">
    <property type="entry name" value="Hepatocyte growth factor receptor"/>
    <property type="match status" value="1"/>
</dbReference>
<dbReference type="FunFam" id="2.60.40.10:FF:002708">
    <property type="entry name" value="Hepatocyte growth factor receptor"/>
    <property type="match status" value="1"/>
</dbReference>
<dbReference type="FunFam" id="3.30.200.20:FF:000188">
    <property type="entry name" value="Hepatocyte growth factor receptor"/>
    <property type="match status" value="1"/>
</dbReference>
<dbReference type="FunFam" id="3.30.1680.10:FF:000006">
    <property type="entry name" value="Macrophage-stimulating 1 receptor b"/>
    <property type="match status" value="1"/>
</dbReference>
<dbReference type="Gene3D" id="2.60.40.10">
    <property type="entry name" value="Immunoglobulins"/>
    <property type="match status" value="2"/>
</dbReference>
<dbReference type="Gene3D" id="3.30.200.20">
    <property type="entry name" value="Phosphorylase Kinase, domain 1"/>
    <property type="match status" value="1"/>
</dbReference>
<dbReference type="Gene3D" id="1.10.510.10">
    <property type="entry name" value="Transferase(Phosphotransferase) domain 1"/>
    <property type="match status" value="1"/>
</dbReference>
<dbReference type="Gene3D" id="2.130.10.10">
    <property type="entry name" value="YVTN repeat-like/Quinoprotein amine dehydrogenase"/>
    <property type="match status" value="1"/>
</dbReference>
<dbReference type="InterPro" id="IPR013783">
    <property type="entry name" value="Ig-like_fold"/>
</dbReference>
<dbReference type="InterPro" id="IPR014756">
    <property type="entry name" value="Ig_E-set"/>
</dbReference>
<dbReference type="InterPro" id="IPR002909">
    <property type="entry name" value="IPT_dom"/>
</dbReference>
<dbReference type="InterPro" id="IPR011009">
    <property type="entry name" value="Kinase-like_dom_sf"/>
</dbReference>
<dbReference type="InterPro" id="IPR031148">
    <property type="entry name" value="Plexin"/>
</dbReference>
<dbReference type="InterPro" id="IPR002165">
    <property type="entry name" value="Plexin_repeat"/>
</dbReference>
<dbReference type="InterPro" id="IPR000719">
    <property type="entry name" value="Prot_kinase_dom"/>
</dbReference>
<dbReference type="InterPro" id="IPR017441">
    <property type="entry name" value="Protein_kinase_ATP_BS"/>
</dbReference>
<dbReference type="InterPro" id="IPR016201">
    <property type="entry name" value="PSI"/>
</dbReference>
<dbReference type="InterPro" id="IPR001627">
    <property type="entry name" value="Semap_dom"/>
</dbReference>
<dbReference type="InterPro" id="IPR036352">
    <property type="entry name" value="Semap_dom_sf"/>
</dbReference>
<dbReference type="InterPro" id="IPR001245">
    <property type="entry name" value="Ser-Thr/Tyr_kinase_cat_dom"/>
</dbReference>
<dbReference type="InterPro" id="IPR008266">
    <property type="entry name" value="Tyr_kinase_AS"/>
</dbReference>
<dbReference type="InterPro" id="IPR020635">
    <property type="entry name" value="Tyr_kinase_cat_dom"/>
</dbReference>
<dbReference type="InterPro" id="IPR016244">
    <property type="entry name" value="Tyr_kinase_HGF/MSP_rcpt"/>
</dbReference>
<dbReference type="InterPro" id="IPR015943">
    <property type="entry name" value="WD40/YVTN_repeat-like_dom_sf"/>
</dbReference>
<dbReference type="PANTHER" id="PTHR22625:SF61">
    <property type="entry name" value="HEPATOCYTE GROWTH FACTOR RECEPTOR"/>
    <property type="match status" value="1"/>
</dbReference>
<dbReference type="PANTHER" id="PTHR22625">
    <property type="entry name" value="PLEXIN"/>
    <property type="match status" value="1"/>
</dbReference>
<dbReference type="Pfam" id="PF07714">
    <property type="entry name" value="PK_Tyr_Ser-Thr"/>
    <property type="match status" value="1"/>
</dbReference>
<dbReference type="Pfam" id="PF01437">
    <property type="entry name" value="PSI"/>
    <property type="match status" value="1"/>
</dbReference>
<dbReference type="Pfam" id="PF01403">
    <property type="entry name" value="Sema"/>
    <property type="match status" value="1"/>
</dbReference>
<dbReference type="Pfam" id="PF01833">
    <property type="entry name" value="TIG"/>
    <property type="match status" value="3"/>
</dbReference>
<dbReference type="PIRSF" id="PIRSF000617">
    <property type="entry name" value="TyrPK_HGF-R"/>
    <property type="match status" value="1"/>
</dbReference>
<dbReference type="PRINTS" id="PR00109">
    <property type="entry name" value="TYRKINASE"/>
</dbReference>
<dbReference type="SMART" id="SM00429">
    <property type="entry name" value="IPT"/>
    <property type="match status" value="4"/>
</dbReference>
<dbReference type="SMART" id="SM00423">
    <property type="entry name" value="PSI"/>
    <property type="match status" value="1"/>
</dbReference>
<dbReference type="SMART" id="SM00630">
    <property type="entry name" value="Sema"/>
    <property type="match status" value="1"/>
</dbReference>
<dbReference type="SMART" id="SM00219">
    <property type="entry name" value="TyrKc"/>
    <property type="match status" value="1"/>
</dbReference>
<dbReference type="SUPFAM" id="SSF81296">
    <property type="entry name" value="E set domains"/>
    <property type="match status" value="3"/>
</dbReference>
<dbReference type="SUPFAM" id="SSF103575">
    <property type="entry name" value="Plexin repeat"/>
    <property type="match status" value="1"/>
</dbReference>
<dbReference type="SUPFAM" id="SSF56112">
    <property type="entry name" value="Protein kinase-like (PK-like)"/>
    <property type="match status" value="1"/>
</dbReference>
<dbReference type="SUPFAM" id="SSF101912">
    <property type="entry name" value="Sema domain"/>
    <property type="match status" value="1"/>
</dbReference>
<dbReference type="PROSITE" id="PS00107">
    <property type="entry name" value="PROTEIN_KINASE_ATP"/>
    <property type="match status" value="1"/>
</dbReference>
<dbReference type="PROSITE" id="PS50011">
    <property type="entry name" value="PROTEIN_KINASE_DOM"/>
    <property type="match status" value="1"/>
</dbReference>
<dbReference type="PROSITE" id="PS00109">
    <property type="entry name" value="PROTEIN_KINASE_TYR"/>
    <property type="match status" value="1"/>
</dbReference>
<dbReference type="PROSITE" id="PS51004">
    <property type="entry name" value="SEMA"/>
    <property type="match status" value="1"/>
</dbReference>
<feature type="signal peptide" evidence="4">
    <location>
        <begin position="1"/>
        <end position="24"/>
    </location>
</feature>
<feature type="chain" id="PRO_0000260429" description="Hepatocyte growth factor receptor">
    <location>
        <begin position="25"/>
        <end position="1382"/>
    </location>
</feature>
<feature type="topological domain" description="Extracellular" evidence="4">
    <location>
        <begin position="25"/>
        <end position="933"/>
    </location>
</feature>
<feature type="transmembrane region" description="Helical" evidence="4">
    <location>
        <begin position="934"/>
        <end position="956"/>
    </location>
</feature>
<feature type="topological domain" description="Cytoplasmic" evidence="4">
    <location>
        <begin position="957"/>
        <end position="1382"/>
    </location>
</feature>
<feature type="domain" description="Sema" evidence="6">
    <location>
        <begin position="27"/>
        <end position="516"/>
    </location>
</feature>
<feature type="domain" description="IPT/TIG 1">
    <location>
        <begin position="564"/>
        <end position="656"/>
    </location>
</feature>
<feature type="domain" description="IPT/TIG 2">
    <location>
        <begin position="658"/>
        <end position="740"/>
    </location>
</feature>
<feature type="domain" description="IPT/TIG 3">
    <location>
        <begin position="743"/>
        <end position="837"/>
    </location>
</feature>
<feature type="domain" description="Protein kinase" evidence="5">
    <location>
        <begin position="1079"/>
        <end position="1346"/>
    </location>
</feature>
<feature type="region of interest" description="Interaction with RANBP9" evidence="1">
    <location>
        <begin position="1213"/>
        <end position="1382"/>
    </location>
</feature>
<feature type="region of interest" description="Interaction with MUC20" evidence="1">
    <location>
        <begin position="1321"/>
        <end position="1360"/>
    </location>
</feature>
<feature type="active site" description="Proton acceptor" evidence="5 7">
    <location>
        <position position="1205"/>
    </location>
</feature>
<feature type="binding site" evidence="5">
    <location>
        <begin position="1085"/>
        <end position="1093"/>
    </location>
    <ligand>
        <name>ATP</name>
        <dbReference type="ChEBI" id="CHEBI:30616"/>
    </ligand>
</feature>
<feature type="binding site" evidence="5">
    <location>
        <position position="1111"/>
    </location>
    <ligand>
        <name>ATP</name>
        <dbReference type="ChEBI" id="CHEBI:30616"/>
    </ligand>
</feature>
<feature type="site" description="Cleavage" evidence="4">
    <location>
        <begin position="308"/>
        <end position="309"/>
    </location>
</feature>
<feature type="modified residue" description="Phosphoserine" evidence="2">
    <location>
        <position position="967"/>
    </location>
</feature>
<feature type="modified residue" description="Phosphothreonine" evidence="2">
    <location>
        <position position="978"/>
    </location>
</feature>
<feature type="modified residue" description="Phosphoserine" evidence="2">
    <location>
        <position position="991"/>
    </location>
</feature>
<feature type="modified residue" description="Phosphoserine" evidence="2">
    <location>
        <position position="998"/>
    </location>
</feature>
<feature type="modified residue" description="Phosphoserine" evidence="2">
    <location>
        <position position="1001"/>
    </location>
</feature>
<feature type="modified residue" description="Phosphotyrosine" evidence="2">
    <location>
        <position position="1004"/>
    </location>
</feature>
<feature type="modified residue" description="Phosphotyrosine" evidence="2">
    <location>
        <position position="1231"/>
    </location>
</feature>
<feature type="modified residue" description="Phosphotyrosine; by autocatalysis" evidence="2">
    <location>
        <position position="1235"/>
    </location>
</feature>
<feature type="modified residue" description="Phosphotyrosine; by autocatalysis" evidence="2">
    <location>
        <position position="1236"/>
    </location>
</feature>
<feature type="modified residue" description="Phosphothreonine" evidence="2">
    <location>
        <position position="1290"/>
    </location>
</feature>
<feature type="modified residue" description="Phosphotyrosine; by autocatalysis" evidence="2">
    <location>
        <position position="1350"/>
    </location>
</feature>
<feature type="modified residue" description="Phosphotyrosine; by autocatalysis" evidence="2">
    <location>
        <position position="1357"/>
    </location>
</feature>
<feature type="modified residue" description="Phosphotyrosine" evidence="2">
    <location>
        <position position="1366"/>
    </location>
</feature>
<feature type="glycosylation site" description="N-linked (GlcNAc...) asparagine" evidence="4">
    <location>
        <position position="45"/>
    </location>
</feature>
<feature type="glycosylation site" description="N-linked (GlcNAc...) asparagine" evidence="4">
    <location>
        <position position="106"/>
    </location>
</feature>
<feature type="glycosylation site" description="N-linked (GlcNAc...) asparagine" evidence="4">
    <location>
        <position position="203"/>
    </location>
</feature>
<feature type="glycosylation site" description="N-linked (GlcNAc...) asparagine" evidence="4">
    <location>
        <position position="359"/>
    </location>
</feature>
<feature type="glycosylation site" description="N-linked (GlcNAc...) asparagine" evidence="4">
    <location>
        <position position="400"/>
    </location>
</feature>
<feature type="glycosylation site" description="N-linked (GlcNAc...) asparagine" evidence="4">
    <location>
        <position position="406"/>
    </location>
</feature>
<feature type="glycosylation site" description="O-linked (Man) threonine" evidence="2">
    <location>
        <position position="583"/>
    </location>
</feature>
<feature type="glycosylation site" description="N-linked (GlcNAc...) asparagine" evidence="4">
    <location>
        <position position="608"/>
    </location>
</feature>
<feature type="glycosylation site" description="N-linked (GlcNAc...) asparagine" evidence="4">
    <location>
        <position position="614"/>
    </location>
</feature>
<feature type="glycosylation site" description="N-linked (GlcNAc...) asparagine" evidence="4">
    <location>
        <position position="636"/>
    </location>
</feature>
<feature type="glycosylation site" description="O-linked (Man) threonine" evidence="2">
    <location>
        <position position="677"/>
    </location>
</feature>
<feature type="glycosylation site" description="O-linked (Man) threonine" evidence="2">
    <location>
        <position position="762"/>
    </location>
</feature>
<feature type="glycosylation site" description="N-linked (GlcNAc...) asparagine" evidence="4">
    <location>
        <position position="786"/>
    </location>
</feature>
<feature type="glycosylation site" description="N-linked (GlcNAc...) asparagine" evidence="4">
    <location>
        <position position="880"/>
    </location>
</feature>
<feature type="disulfide bond" evidence="6">
    <location>
        <begin position="95"/>
        <end position="101"/>
    </location>
</feature>
<feature type="disulfide bond" evidence="6">
    <location>
        <begin position="98"/>
        <end position="160"/>
    </location>
</feature>
<feature type="disulfide bond" evidence="6">
    <location>
        <begin position="133"/>
        <end position="141"/>
    </location>
</feature>
<feature type="disulfide bond" evidence="6">
    <location>
        <begin position="173"/>
        <end position="176"/>
    </location>
</feature>
<feature type="disulfide bond" evidence="6">
    <location>
        <begin position="299"/>
        <end position="364"/>
    </location>
</feature>
<feature type="disulfide bond" evidence="6">
    <location>
        <begin position="386"/>
        <end position="398"/>
    </location>
</feature>
<feature type="disulfide bond" evidence="6">
    <location>
        <begin position="521"/>
        <end position="539"/>
    </location>
</feature>
<feature type="disulfide bond" evidence="6">
    <location>
        <begin position="527"/>
        <end position="562"/>
    </location>
</feature>
<feature type="disulfide bond" evidence="6">
    <location>
        <begin position="530"/>
        <end position="546"/>
    </location>
</feature>
<feature type="disulfide bond" evidence="6">
    <location>
        <begin position="542"/>
        <end position="552"/>
    </location>
</feature>
<organism>
    <name type="scientific">Oryctolagus cuniculus</name>
    <name type="common">Rabbit</name>
    <dbReference type="NCBI Taxonomy" id="9986"/>
    <lineage>
        <taxon>Eukaryota</taxon>
        <taxon>Metazoa</taxon>
        <taxon>Chordata</taxon>
        <taxon>Craniata</taxon>
        <taxon>Vertebrata</taxon>
        <taxon>Euteleostomi</taxon>
        <taxon>Mammalia</taxon>
        <taxon>Eutheria</taxon>
        <taxon>Euarchontoglires</taxon>
        <taxon>Glires</taxon>
        <taxon>Lagomorpha</taxon>
        <taxon>Leporidae</taxon>
        <taxon>Oryctolagus</taxon>
    </lineage>
</organism>
<comment type="function">
    <text evidence="1">Receptor tyrosine kinase that transduces signals from the extracellular matrix into the cytoplasm by binding to hepatocyte growth factor/HGF ligand. Regulates many physiological processes including proliferation, scattering, morphogenesis and survival. Ligand binding at the cell surface induces autophosphorylation of MET on its intracellular domain that provides docking sites for downstream signaling molecules. Following activation by ligand, interacts with the PI3-kinase subunit PIK3R1, PLCG1, SRC, GRB2, STAT3 or the adapter GAB1. Recruitment of these downstream effectors by MET leads to the activation of several signaling cascades including the RAS-ERK, PI3 kinase-AKT, or PLCgamma-PKC. The RAS-ERK activation is associated with the morphogenetic effects while PI3K/AKT coordinates prosurvival effects. During embryonic development, MET signaling plays a role in gastrulation, development and migration of muscles and neuronal precursors, angiogenesis and kidney formation. In adults, participates in wound healing as well as organ regeneration and tissue remodeling. Also promotes differentiation and proliferation of hematopoietic cells (By similarity).</text>
</comment>
<comment type="catalytic activity">
    <reaction evidence="7">
        <text>L-tyrosyl-[protein] + ATP = O-phospho-L-tyrosyl-[protein] + ADP + H(+)</text>
        <dbReference type="Rhea" id="RHEA:10596"/>
        <dbReference type="Rhea" id="RHEA-COMP:10136"/>
        <dbReference type="Rhea" id="RHEA-COMP:20101"/>
        <dbReference type="ChEBI" id="CHEBI:15378"/>
        <dbReference type="ChEBI" id="CHEBI:30616"/>
        <dbReference type="ChEBI" id="CHEBI:46858"/>
        <dbReference type="ChEBI" id="CHEBI:61978"/>
        <dbReference type="ChEBI" id="CHEBI:456216"/>
        <dbReference type="EC" id="2.7.10.1"/>
    </reaction>
</comment>
<comment type="activity regulation">
    <text evidence="1">In its inactive state, the C-terminal tail interacts with the catalytic domain and inhibits the kinase activity. Upon ligand binding, the C-terminal tail is displaced and becomes phosphorylated, thus increasing the kinase activity (By similarity).</text>
</comment>
<comment type="subunit">
    <text evidence="2 3">Heterodimer made of an alpha chain (50 kDa) and a beta chain (145 kDa) which are disulfide linked. Binds PLXNB1. Interacts when phosphorylated with downstream effectors including STAT3, PIK3R1, SRC, PCLG1, GRB2 and GAB1. Interacts with SPSB1, SPSB2 and SPSB4. Interacts with INPP5D/SHIP1. When phosphorylated at Tyr-1357, interacts with INPPL1/SHIP2. Interacts with RANBP9 and RANBP10, as well as SPSB1, SPSB2, SPSB3 and SPSB4. SPSB1 binding occurs in the presence and in the absence of HGF, however HGF treatment has a positive effect on this interaction. Interacts with MUC20; prevents interaction with GRB2 and suppresses hepatocyte growth factor-induced cell proliferation. Interacts with GRB10. Interacts with PTPN1 and PTPN2. Interacts with HSP90AA1 and HSP90AB1; the interaction suppresses MET kinase activity. Interacts with tensin TNS3 (By similarity). Interacts (when phosphorylated) with tensin TNS4 (via SH2 domain); the interaction increases MET protein stability by inhibiting MET endocytosis and subsequent lysosomal degradation (By similarity).</text>
</comment>
<comment type="subcellular location">
    <subcellularLocation>
        <location evidence="1">Membrane</location>
        <topology evidence="1">Single-pass type I membrane protein</topology>
    </subcellularLocation>
</comment>
<comment type="domain">
    <text evidence="1">The kinase domain is involved in SPSB1 binding.</text>
</comment>
<comment type="domain">
    <text evidence="1">The beta-propeller Sema domain mediates binding to HGF.</text>
</comment>
<comment type="PTM">
    <text evidence="2">Autophosphorylated in response to ligand binding on Tyr-1235 and Tyr-1236 in the kinase domain leading to further phosphorylation of Tyr-1350 and Tyr-1357 in the C-terminal multifunctional docking site. Dephosphorylated by PTPRJ at Tyr-1350 and Tyr-1366. Dephosphorylated by PTPN1 and PTPN2 (By similarity).</text>
</comment>
<comment type="PTM">
    <text evidence="2">Ubiquitinated. Ubiquitination by CBL regulates the receptor stability and activity through proteasomal degradation (By similarity).</text>
</comment>
<comment type="PTM">
    <text evidence="2">O-mannosylation of IPT/TIG domains by TMEM260 is required for protein maturation. O-mannosylated residues are composed of single mannose glycans that are not elongated or modified.</text>
</comment>
<comment type="similarity">
    <text evidence="5">Belongs to the protein kinase superfamily. Tyr protein kinase family.</text>
</comment>
<name>MET_RABIT</name>
<protein>
    <recommendedName>
        <fullName>Hepatocyte growth factor receptor</fullName>
        <shortName>HGF receptor</shortName>
        <ecNumber>2.7.10.1</ecNumber>
    </recommendedName>
    <alternativeName>
        <fullName>HGF/SF receptor</fullName>
    </alternativeName>
    <alternativeName>
        <fullName>Proto-oncogene c-Met</fullName>
    </alternativeName>
    <alternativeName>
        <fullName>Scatter factor receptor</fullName>
        <shortName>SF receptor</shortName>
    </alternativeName>
    <alternativeName>
        <fullName>Tyrosine-protein kinase Met</fullName>
    </alternativeName>
</protein>
<accession>Q09YN5</accession>
<proteinExistence type="inferred from homology"/>
<sequence length="1382" mass="153973">MKAPAVLAPGILVLLFTLVPRSHGECKEALVKSEMNVNMKYQLPNFTAETPIQNVLLHQHHVYLGAINHIYVLNDKDLQKVAEYTTGPVLEHPDCLPCQDCSSKANSSGAVWKDNINLALLVDKYYDDQLISCGSVNRGTCQRHVLPPDNPADIQSGVYCMFSPQADEEPGQCPDCVVSPLGAKVLLSKKQRFIYFFVGNTINSSYLPDHSLHSISVRRLKETQDGFKFLTDQSYIDVLPEFRDSYPIKYVHAFESNHFIYFLTVQKETLDAQTFHTRIIRFCSKDSGLHSYMEMPLECILTEKRRKRATREEVFNILQAAYVSKPGAHLARQIGATPNDDILYGVFAQSKPDSAEPMNRSAVCAFPIKYINEFFNKIVNKNNVKCLQHFYGPNHEHCFNRTLLRNSSDCEARSDEYRTELTTALQRVDLFMGQFNQVLLTSISTFIKGDLTIANLGTSEGRFMQVVISRTILNVPHVNFRLDSHPVSPEVVVEHPLNQNGYTLVVTGNKITKIPLNGLGCGHFQSCSQCLSAPPFVQCGWCHDKCVPSEECPSGTWTQEICLPAIYKVFPASAPLEGGTTLTICGWDFGFRKNNKFDLKKTKVLLGNESCALNLSESTTNTLKCTVGATTHEHFNMSITVSNSRGRTQYSTFSYVAPVITSISPSYGPKAGGTLLTLTGKYLDSGNSRHISIGGKTCTLKSMSNSILECYTPAQTISTEFPVKLEIDLASRETSSFSYREDPIVDEFYPTKSFISGGSTITGVGKNLDSVSVPRMVISVHEAGSNFTVACQHRSNSEIICCTTPSLQQLNLHLPLKTKAFFMLDGILSKHFDLTYVHNPVFKPFEKPVMISMGNENVLEIKGNDIDPEAVKGEVLKVGNKSCENIHSDSEAVLCTVPNDLLKLNSELNIEWKQAVSSTVLGKVIVQPDQNFMGLIVGGVSISIILLLLLGLFLWLKKKKRIKDLGSELVRYDARVHTPHLDRLVSARSVSPTTEMVSNESVDYRATFPEDQFPNSSQNGSCRQVQYPLTDLSPILTSGDSDISSPLLQNTVHIDLSALNPELVQAVQHVVIGPSSLIVHFSEVIGRGHFGCVYHGTLLDNDGKKIHCAVKSLNRITDIGEVSQFLTEGIIMKDFSHPNVLSLLGICLRSEGSPLVVLPYMKHGDLRNFIRNETHNPTVKDLIGFGLQVAKGMKYLASKKFVHRDLAARNCMLDEKFTVKVADFGLARDMYDKEYYSVHNKTGAKLPVKWMALESLQTQKFTTKSDVWSFGVLLWELMTRGAPPYPDVNTFDITVYLLQGRRLLQPEYCPDALYEVMLKCWHPKAEMRPSFSELVSRISTIFSTFIGEHYVHVNATYVNVKCVAPYPSLLSSQDNVDGTVDT</sequence>
<reference key="1">
    <citation type="submission" date="2006-09" db="EMBL/GenBank/DDBJ databases">
        <title>NISC comparative sequencing initiative.</title>
        <authorList>
            <person name="Antonellis A."/>
            <person name="Ayele K."/>
            <person name="Benjamin B."/>
            <person name="Blakesley R.W."/>
            <person name="Boakye A."/>
            <person name="Bouffard G.G."/>
            <person name="Brinkley C."/>
            <person name="Brooks S."/>
            <person name="Chu G."/>
            <person name="Coleman H."/>
            <person name="Engle J."/>
            <person name="Gestole M."/>
            <person name="Greene A."/>
            <person name="Guan X."/>
            <person name="Gupta J."/>
            <person name="Haghighi P."/>
            <person name="Han J."/>
            <person name="Hansen N."/>
            <person name="Ho S.-L."/>
            <person name="Hu P."/>
            <person name="Hunter G."/>
            <person name="Hurle B."/>
            <person name="Idol J.R."/>
            <person name="Kwong P."/>
            <person name="Laric P."/>
            <person name="Larson S."/>
            <person name="Lee-Lin S.-Q."/>
            <person name="Legaspi R."/>
            <person name="Madden M."/>
            <person name="Maduro Q.L."/>
            <person name="Maduro V.B."/>
            <person name="Margulies E.H."/>
            <person name="Masiello C."/>
            <person name="Maskeri B."/>
            <person name="McDowell J."/>
            <person name="Mojidi H.A."/>
            <person name="Mullikin J.C."/>
            <person name="Oestreicher J.S."/>
            <person name="Park M."/>
            <person name="Portnoy M.E."/>
            <person name="Prasad A."/>
            <person name="Puri O."/>
            <person name="Reddix-Dugue N."/>
            <person name="Schandler K."/>
            <person name="Schueler M.G."/>
            <person name="Sison C."/>
            <person name="Stantripop S."/>
            <person name="Stephen E."/>
            <person name="Taye A."/>
            <person name="Thomas J.W."/>
            <person name="Thomas P.J."/>
            <person name="Tsipouri V."/>
            <person name="Ung L."/>
            <person name="Vogt J.L."/>
            <person name="Wetherby K.D."/>
            <person name="Young A."/>
            <person name="Green E.D."/>
        </authorList>
    </citation>
    <scope>NUCLEOTIDE SEQUENCE [LARGE SCALE GENOMIC DNA]</scope>
</reference>
<keyword id="KW-0067">ATP-binding</keyword>
<keyword id="KW-1015">Disulfide bond</keyword>
<keyword id="KW-0325">Glycoprotein</keyword>
<keyword id="KW-0418">Kinase</keyword>
<keyword id="KW-0472">Membrane</keyword>
<keyword id="KW-0547">Nucleotide-binding</keyword>
<keyword id="KW-0597">Phosphoprotein</keyword>
<keyword id="KW-0656">Proto-oncogene</keyword>
<keyword id="KW-0675">Receptor</keyword>
<keyword id="KW-1185">Reference proteome</keyword>
<keyword id="KW-0677">Repeat</keyword>
<keyword id="KW-0732">Signal</keyword>
<keyword id="KW-0808">Transferase</keyword>
<keyword id="KW-0812">Transmembrane</keyword>
<keyword id="KW-1133">Transmembrane helix</keyword>
<keyword id="KW-0829">Tyrosine-protein kinase</keyword>
<keyword id="KW-0832">Ubl conjugation</keyword>